<organism>
    <name type="scientific">Bifidobacterium longum (strain NCC 2705)</name>
    <dbReference type="NCBI Taxonomy" id="206672"/>
    <lineage>
        <taxon>Bacteria</taxon>
        <taxon>Bacillati</taxon>
        <taxon>Actinomycetota</taxon>
        <taxon>Actinomycetes</taxon>
        <taxon>Bifidobacteriales</taxon>
        <taxon>Bifidobacteriaceae</taxon>
        <taxon>Bifidobacterium</taxon>
    </lineage>
</organism>
<protein>
    <recommendedName>
        <fullName evidence="1">Na(+)/H(+) antiporter NhaA</fullName>
    </recommendedName>
    <alternativeName>
        <fullName evidence="1">Sodium/proton antiporter NhaA</fullName>
    </alternativeName>
</protein>
<comment type="function">
    <text evidence="1">Na(+)/H(+) antiporter that extrudes sodium in exchange for external protons.</text>
</comment>
<comment type="catalytic activity">
    <reaction evidence="1">
        <text>Na(+)(in) + 2 H(+)(out) = Na(+)(out) + 2 H(+)(in)</text>
        <dbReference type="Rhea" id="RHEA:29251"/>
        <dbReference type="ChEBI" id="CHEBI:15378"/>
        <dbReference type="ChEBI" id="CHEBI:29101"/>
    </reaction>
    <physiologicalReaction direction="left-to-right" evidence="1">
        <dbReference type="Rhea" id="RHEA:29252"/>
    </physiologicalReaction>
</comment>
<comment type="subcellular location">
    <subcellularLocation>
        <location evidence="1">Cell membrane</location>
        <topology evidence="1">Multi-pass membrane protein</topology>
    </subcellularLocation>
</comment>
<comment type="similarity">
    <text evidence="1">Belongs to the NhaA Na(+)/H(+) (TC 2.A.33) antiporter family.</text>
</comment>
<dbReference type="EMBL" id="AE014295">
    <property type="protein sequence ID" value="AAN24754.1"/>
    <property type="molecule type" value="Genomic_DNA"/>
</dbReference>
<dbReference type="RefSeq" id="NP_696118.1">
    <property type="nucleotide sequence ID" value="NC_004307.2"/>
</dbReference>
<dbReference type="RefSeq" id="WP_011068211.1">
    <property type="nucleotide sequence ID" value="NC_004307.2"/>
</dbReference>
<dbReference type="SMR" id="Q8G5R2"/>
<dbReference type="TCDB" id="2.A.33.1.5">
    <property type="family name" value="the nhaa na(+):h(+) antiporter (nhaa) family"/>
</dbReference>
<dbReference type="EnsemblBacteria" id="AAN24754">
    <property type="protein sequence ID" value="AAN24754"/>
    <property type="gene ID" value="BL0942"/>
</dbReference>
<dbReference type="KEGG" id="blo:BL0942"/>
<dbReference type="PATRIC" id="fig|206672.9.peg.644"/>
<dbReference type="HOGENOM" id="CLU_015803_0_0_11"/>
<dbReference type="OrthoDB" id="9808135at2"/>
<dbReference type="PhylomeDB" id="Q8G5R2"/>
<dbReference type="Proteomes" id="UP000000439">
    <property type="component" value="Chromosome"/>
</dbReference>
<dbReference type="GO" id="GO:0005886">
    <property type="term" value="C:plasma membrane"/>
    <property type="evidence" value="ECO:0007669"/>
    <property type="project" value="UniProtKB-SubCell"/>
</dbReference>
<dbReference type="GO" id="GO:0015385">
    <property type="term" value="F:sodium:proton antiporter activity"/>
    <property type="evidence" value="ECO:0007669"/>
    <property type="project" value="TreeGrafter"/>
</dbReference>
<dbReference type="GO" id="GO:0006885">
    <property type="term" value="P:regulation of pH"/>
    <property type="evidence" value="ECO:0007669"/>
    <property type="project" value="InterPro"/>
</dbReference>
<dbReference type="Gene3D" id="1.20.1530.10">
    <property type="entry name" value="Na+/H+ antiporter like domain"/>
    <property type="match status" value="1"/>
</dbReference>
<dbReference type="HAMAP" id="MF_01844">
    <property type="entry name" value="NhaA"/>
    <property type="match status" value="1"/>
</dbReference>
<dbReference type="InterPro" id="IPR023171">
    <property type="entry name" value="Na/H_antiporter_dom_sf"/>
</dbReference>
<dbReference type="InterPro" id="IPR004670">
    <property type="entry name" value="NhaA"/>
</dbReference>
<dbReference type="PANTHER" id="PTHR30341:SF0">
    <property type="entry name" value="NA(+)_H(+) ANTIPORTER NHAA"/>
    <property type="match status" value="1"/>
</dbReference>
<dbReference type="PANTHER" id="PTHR30341">
    <property type="entry name" value="SODIUM ION/PROTON ANTIPORTER NHAA-RELATED"/>
    <property type="match status" value="1"/>
</dbReference>
<dbReference type="Pfam" id="PF06965">
    <property type="entry name" value="Na_H_antiport_1"/>
    <property type="match status" value="2"/>
</dbReference>
<accession>Q8G5R2</accession>
<reference key="1">
    <citation type="journal article" date="2002" name="Proc. Natl. Acad. Sci. U.S.A.">
        <title>The genome sequence of Bifidobacterium longum reflects its adaptation to the human gastrointestinal tract.</title>
        <authorList>
            <person name="Schell M.A."/>
            <person name="Karmirantzou M."/>
            <person name="Snel B."/>
            <person name="Vilanova D."/>
            <person name="Berger B."/>
            <person name="Pessi G."/>
            <person name="Zwahlen M.-C."/>
            <person name="Desiere F."/>
            <person name="Bork P."/>
            <person name="Delley M."/>
            <person name="Pridmore R.D."/>
            <person name="Arigoni F."/>
        </authorList>
    </citation>
    <scope>NUCLEOTIDE SEQUENCE [LARGE SCALE GENOMIC DNA]</scope>
    <source>
        <strain>NCC 2705</strain>
    </source>
</reference>
<proteinExistence type="inferred from homology"/>
<sequence>MATTAGAKKGLWSTIRRIAASDRISGLIMLGFALTGLVLANLPATAHAFETVAETHLFIPYTNLDLPIGHWAQDGLLTIFFLTVGLELKQELTTGSLANPKAAAVPMLCAVGGMIAPPILFLAVTALFSQIGPGEPGTLILTTTGSSIPFSEMSHGWAVPTATDIAFSLAVLALFAKALPGSIRAFLMTLATVDDLLAIILIAVFFSSINAWYWFIGIAVCAAIWAYLVRLKKVPWIAVGIVGILAWIMMFEAGVHPTLAGVLVGLLTPSREMHGELSPRAERYANKLQPFSALLALPIFALFATGVHFESMSPLLLASPLVIALIVALVVGKPLGIITTAWLSTHVGGLKMAKGLRVRDMIPAAVACGIGFTVSFLIASLAYKNAELSAEARFGVLVASLIAAAISGVLLSRQSKRFEKTAAAAAADEEDDESIDGDGIGQPSHTTEPTTPTEHPGTLADGTASVEIDFRH</sequence>
<evidence type="ECO:0000255" key="1">
    <source>
        <dbReference type="HAMAP-Rule" id="MF_01844"/>
    </source>
</evidence>
<evidence type="ECO:0000256" key="2">
    <source>
        <dbReference type="SAM" id="MobiDB-lite"/>
    </source>
</evidence>
<gene>
    <name evidence="1" type="primary">nhaA</name>
    <name type="ordered locus">BL0942</name>
</gene>
<feature type="chain" id="PRO_0000334241" description="Na(+)/H(+) antiporter NhaA">
    <location>
        <begin position="1"/>
        <end position="472"/>
    </location>
</feature>
<feature type="transmembrane region" description="Helical" evidence="1">
    <location>
        <begin position="24"/>
        <end position="44"/>
    </location>
</feature>
<feature type="transmembrane region" description="Helical" evidence="1">
    <location>
        <begin position="66"/>
        <end position="86"/>
    </location>
</feature>
<feature type="transmembrane region" description="Helical" evidence="1">
    <location>
        <begin position="108"/>
        <end position="128"/>
    </location>
</feature>
<feature type="transmembrane region" description="Helical" evidence="1">
    <location>
        <begin position="156"/>
        <end position="176"/>
    </location>
</feature>
<feature type="transmembrane region" description="Helical" evidence="1">
    <location>
        <begin position="196"/>
        <end position="216"/>
    </location>
</feature>
<feature type="transmembrane region" description="Helical" evidence="1">
    <location>
        <begin position="234"/>
        <end position="254"/>
    </location>
</feature>
<feature type="transmembrane region" description="Helical" evidence="1">
    <location>
        <begin position="290"/>
        <end position="310"/>
    </location>
</feature>
<feature type="transmembrane region" description="Helical" evidence="1">
    <location>
        <begin position="312"/>
        <end position="332"/>
    </location>
</feature>
<feature type="transmembrane region" description="Helical" evidence="1">
    <location>
        <begin position="361"/>
        <end position="381"/>
    </location>
</feature>
<feature type="transmembrane region" description="Helical" evidence="1">
    <location>
        <begin position="392"/>
        <end position="412"/>
    </location>
</feature>
<feature type="region of interest" description="Disordered" evidence="2">
    <location>
        <begin position="422"/>
        <end position="472"/>
    </location>
</feature>
<feature type="compositionally biased region" description="Acidic residues" evidence="2">
    <location>
        <begin position="427"/>
        <end position="436"/>
    </location>
</feature>
<feature type="compositionally biased region" description="Low complexity" evidence="2">
    <location>
        <begin position="445"/>
        <end position="456"/>
    </location>
</feature>
<keyword id="KW-0050">Antiport</keyword>
<keyword id="KW-1003">Cell membrane</keyword>
<keyword id="KW-0406">Ion transport</keyword>
<keyword id="KW-0472">Membrane</keyword>
<keyword id="KW-1185">Reference proteome</keyword>
<keyword id="KW-0915">Sodium</keyword>
<keyword id="KW-0739">Sodium transport</keyword>
<keyword id="KW-0812">Transmembrane</keyword>
<keyword id="KW-1133">Transmembrane helix</keyword>
<keyword id="KW-0813">Transport</keyword>
<name>NHAA_BIFLO</name>